<keyword id="KW-0349">Heme</keyword>
<keyword id="KW-0350">Heme biosynthesis</keyword>
<keyword id="KW-0408">Iron</keyword>
<keyword id="KW-0479">Metal-binding</keyword>
<keyword id="KW-0560">Oxidoreductase</keyword>
<organism>
    <name type="scientific">Staphylococcus aureus (strain N315)</name>
    <dbReference type="NCBI Taxonomy" id="158879"/>
    <lineage>
        <taxon>Bacteria</taxon>
        <taxon>Bacillati</taxon>
        <taxon>Bacillota</taxon>
        <taxon>Bacilli</taxon>
        <taxon>Bacillales</taxon>
        <taxon>Staphylococcaceae</taxon>
        <taxon>Staphylococcus</taxon>
    </lineage>
</organism>
<accession>Q7A759</accession>
<comment type="function">
    <text evidence="1">Involved in coproporphyrin-dependent heme b biosynthesis. Catalyzes the decarboxylation of Fe-coproporphyrin III (coproheme) to heme b (protoheme IX), the last step of the pathway. The reaction occurs in a stepwise manner with a three-propionate intermediate.</text>
</comment>
<comment type="catalytic activity">
    <reaction evidence="1">
        <text>Fe-coproporphyrin III + 2 H2O2 + 2 H(+) = heme b + 2 CO2 + 4 H2O</text>
        <dbReference type="Rhea" id="RHEA:56516"/>
        <dbReference type="ChEBI" id="CHEBI:15377"/>
        <dbReference type="ChEBI" id="CHEBI:15378"/>
        <dbReference type="ChEBI" id="CHEBI:16240"/>
        <dbReference type="ChEBI" id="CHEBI:16526"/>
        <dbReference type="ChEBI" id="CHEBI:60344"/>
        <dbReference type="ChEBI" id="CHEBI:68438"/>
        <dbReference type="EC" id="1.3.98.5"/>
    </reaction>
    <physiologicalReaction direction="left-to-right" evidence="1">
        <dbReference type="Rhea" id="RHEA:56517"/>
    </physiologicalReaction>
</comment>
<comment type="catalytic activity">
    <reaction evidence="1">
        <text>Fe-coproporphyrin III + H2O2 + H(+) = harderoheme III + CO2 + 2 H2O</text>
        <dbReference type="Rhea" id="RHEA:57940"/>
        <dbReference type="ChEBI" id="CHEBI:15377"/>
        <dbReference type="ChEBI" id="CHEBI:15378"/>
        <dbReference type="ChEBI" id="CHEBI:16240"/>
        <dbReference type="ChEBI" id="CHEBI:16526"/>
        <dbReference type="ChEBI" id="CHEBI:68438"/>
        <dbReference type="ChEBI" id="CHEBI:142463"/>
    </reaction>
    <physiologicalReaction direction="left-to-right" evidence="1">
        <dbReference type="Rhea" id="RHEA:57941"/>
    </physiologicalReaction>
</comment>
<comment type="catalytic activity">
    <reaction evidence="1">
        <text>harderoheme III + H2O2 + H(+) = heme b + CO2 + 2 H2O</text>
        <dbReference type="Rhea" id="RHEA:57944"/>
        <dbReference type="ChEBI" id="CHEBI:15377"/>
        <dbReference type="ChEBI" id="CHEBI:15378"/>
        <dbReference type="ChEBI" id="CHEBI:16240"/>
        <dbReference type="ChEBI" id="CHEBI:16526"/>
        <dbReference type="ChEBI" id="CHEBI:60344"/>
        <dbReference type="ChEBI" id="CHEBI:142463"/>
    </reaction>
    <physiologicalReaction direction="left-to-right" evidence="1">
        <dbReference type="Rhea" id="RHEA:57945"/>
    </physiologicalReaction>
</comment>
<comment type="cofactor">
    <cofactor evidence="1">
        <name>Fe-coproporphyrin III</name>
        <dbReference type="ChEBI" id="CHEBI:68438"/>
    </cofactor>
    <text evidence="1">Fe-coproporphyrin III acts both as a substrate and a redox cofactor.</text>
</comment>
<comment type="pathway">
    <text evidence="1">Porphyrin-containing compound metabolism; protoheme biosynthesis.</text>
</comment>
<comment type="similarity">
    <text evidence="1">Belongs to the ChdC family. Type 1 subfamily.</text>
</comment>
<dbReference type="EC" id="1.3.98.5" evidence="1"/>
<dbReference type="EMBL" id="BA000018">
    <property type="protein sequence ID" value="BAB41776.1"/>
    <property type="molecule type" value="Genomic_DNA"/>
</dbReference>
<dbReference type="PIR" id="E89827">
    <property type="entry name" value="E89827"/>
</dbReference>
<dbReference type="SMR" id="Q7A759"/>
<dbReference type="EnsemblBacteria" id="BAB41776">
    <property type="protein sequence ID" value="BAB41776"/>
    <property type="gene ID" value="BAB41776"/>
</dbReference>
<dbReference type="KEGG" id="sau:SA0544"/>
<dbReference type="HOGENOM" id="CLU_063226_1_0_9"/>
<dbReference type="UniPathway" id="UPA00252"/>
<dbReference type="GO" id="GO:0020037">
    <property type="term" value="F:heme binding"/>
    <property type="evidence" value="ECO:0007669"/>
    <property type="project" value="InterPro"/>
</dbReference>
<dbReference type="GO" id="GO:0046872">
    <property type="term" value="F:metal ion binding"/>
    <property type="evidence" value="ECO:0007669"/>
    <property type="project" value="UniProtKB-KW"/>
</dbReference>
<dbReference type="GO" id="GO:0016634">
    <property type="term" value="F:oxidoreductase activity, acting on the CH-CH group of donors, oxygen as acceptor"/>
    <property type="evidence" value="ECO:0007669"/>
    <property type="project" value="UniProtKB-UniRule"/>
</dbReference>
<dbReference type="GO" id="GO:0004601">
    <property type="term" value="F:peroxidase activity"/>
    <property type="evidence" value="ECO:0007669"/>
    <property type="project" value="InterPro"/>
</dbReference>
<dbReference type="GO" id="GO:0006785">
    <property type="term" value="P:heme B biosynthetic process"/>
    <property type="evidence" value="ECO:0007669"/>
    <property type="project" value="UniProtKB-UniRule"/>
</dbReference>
<dbReference type="Gene3D" id="3.30.70.1030">
    <property type="entry name" value="Apc35880, domain 1"/>
    <property type="match status" value="2"/>
</dbReference>
<dbReference type="HAMAP" id="MF_01442">
    <property type="entry name" value="Coproheme_decarbox_1"/>
    <property type="match status" value="1"/>
</dbReference>
<dbReference type="InterPro" id="IPR031332">
    <property type="entry name" value="CHDC"/>
</dbReference>
<dbReference type="InterPro" id="IPR010644">
    <property type="entry name" value="ChdC/CLD"/>
</dbReference>
<dbReference type="InterPro" id="IPR011008">
    <property type="entry name" value="Dimeric_a/b-barrel"/>
</dbReference>
<dbReference type="NCBIfam" id="NF008913">
    <property type="entry name" value="PRK12276.1"/>
    <property type="match status" value="1"/>
</dbReference>
<dbReference type="PANTHER" id="PTHR36843:SF1">
    <property type="entry name" value="COPROHEME DECARBOXYLASE"/>
    <property type="match status" value="1"/>
</dbReference>
<dbReference type="PANTHER" id="PTHR36843">
    <property type="entry name" value="HEME-DEPENDENT PEROXIDASE YWFI-RELATED"/>
    <property type="match status" value="1"/>
</dbReference>
<dbReference type="Pfam" id="PF06778">
    <property type="entry name" value="Chlor_dismutase"/>
    <property type="match status" value="1"/>
</dbReference>
<dbReference type="SUPFAM" id="SSF54909">
    <property type="entry name" value="Dimeric alpha+beta barrel"/>
    <property type="match status" value="1"/>
</dbReference>
<gene>
    <name evidence="1" type="primary">chdC</name>
    <name type="ordered locus">SA0544</name>
</gene>
<proteinExistence type="evidence at protein level"/>
<sequence>MSQAAETLDGWYSLHLFYAVDWASLRIVPKDERDALVTEFQSFLENTATVRSSKSGDQAIYNITGQKADLLLWFLRPEMKSLNHIENEFNKLRIADFLIPTYSYVSVIELSNYLAGKSDEDPYENPHIKARLYPELPHSDYICFYPMNKRRNETYNWYMLTMEERQKLMYDHGMIGRKYAGKIKQFITGSVGFDDFEWGVTLFSDDVLQFKKIVYEMRFDETTARYGEFGSFFVGHLINTNEFDQFFAIS</sequence>
<protein>
    <recommendedName>
        <fullName evidence="1">Coproheme decarboxylase</fullName>
        <ecNumber evidence="1">1.3.98.5</ecNumber>
    </recommendedName>
    <alternativeName>
        <fullName evidence="1">Coproheme III oxidative decarboxylase</fullName>
    </alternativeName>
    <alternativeName>
        <fullName evidence="1">Hydrogen peroxide-dependent heme synthase</fullName>
    </alternativeName>
</protein>
<reference key="1">
    <citation type="journal article" date="2001" name="Lancet">
        <title>Whole genome sequencing of meticillin-resistant Staphylococcus aureus.</title>
        <authorList>
            <person name="Kuroda M."/>
            <person name="Ohta T."/>
            <person name="Uchiyama I."/>
            <person name="Baba T."/>
            <person name="Yuzawa H."/>
            <person name="Kobayashi I."/>
            <person name="Cui L."/>
            <person name="Oguchi A."/>
            <person name="Aoki K."/>
            <person name="Nagai Y."/>
            <person name="Lian J.-Q."/>
            <person name="Ito T."/>
            <person name="Kanamori M."/>
            <person name="Matsumaru H."/>
            <person name="Maruyama A."/>
            <person name="Murakami H."/>
            <person name="Hosoyama A."/>
            <person name="Mizutani-Ui Y."/>
            <person name="Takahashi N.K."/>
            <person name="Sawano T."/>
            <person name="Inoue R."/>
            <person name="Kaito C."/>
            <person name="Sekimizu K."/>
            <person name="Hirakawa H."/>
            <person name="Kuhara S."/>
            <person name="Goto S."/>
            <person name="Yabuzaki J."/>
            <person name="Kanehisa M."/>
            <person name="Yamashita A."/>
            <person name="Oshima K."/>
            <person name="Furuya K."/>
            <person name="Yoshino C."/>
            <person name="Shiba T."/>
            <person name="Hattori M."/>
            <person name="Ogasawara N."/>
            <person name="Hayashi H."/>
            <person name="Hiramatsu K."/>
        </authorList>
    </citation>
    <scope>NUCLEOTIDE SEQUENCE [LARGE SCALE GENOMIC DNA]</scope>
    <source>
        <strain>N315</strain>
    </source>
</reference>
<reference key="2">
    <citation type="submission" date="2007-10" db="UniProtKB">
        <title>Shotgun proteomic analysis of total and membrane protein extracts of S. aureus strain N315.</title>
        <authorList>
            <person name="Vaezzadeh A.R."/>
            <person name="Deshusses J."/>
            <person name="Lescuyer P."/>
            <person name="Hochstrasser D.F."/>
        </authorList>
    </citation>
    <scope>IDENTIFICATION BY MASS SPECTROMETRY [LARGE SCALE ANALYSIS]</scope>
    <source>
        <strain>N315</strain>
    </source>
</reference>
<feature type="chain" id="PRO_0000294050" description="Coproheme decarboxylase">
    <location>
        <begin position="1"/>
        <end position="250"/>
    </location>
</feature>
<feature type="active site" evidence="1">
    <location>
        <position position="145"/>
    </location>
</feature>
<feature type="binding site" evidence="1">
    <location>
        <position position="131"/>
    </location>
    <ligand>
        <name>Fe-coproporphyrin III</name>
        <dbReference type="ChEBI" id="CHEBI:68438"/>
    </ligand>
</feature>
<feature type="binding site" evidence="1">
    <location>
        <begin position="145"/>
        <end position="149"/>
    </location>
    <ligand>
        <name>Fe-coproporphyrin III</name>
        <dbReference type="ChEBI" id="CHEBI:68438"/>
    </ligand>
</feature>
<feature type="binding site" description="axial binding residue" evidence="1">
    <location>
        <position position="172"/>
    </location>
    <ligand>
        <name>Fe-coproporphyrin III</name>
        <dbReference type="ChEBI" id="CHEBI:68438"/>
    </ligand>
    <ligandPart>
        <name>Fe</name>
        <dbReference type="ChEBI" id="CHEBI:18248"/>
    </ligandPart>
</feature>
<feature type="binding site" evidence="1">
    <location>
        <position position="185"/>
    </location>
    <ligand>
        <name>Fe-coproporphyrin III</name>
        <dbReference type="ChEBI" id="CHEBI:68438"/>
    </ligand>
</feature>
<evidence type="ECO:0000255" key="1">
    <source>
        <dbReference type="HAMAP-Rule" id="MF_01442"/>
    </source>
</evidence>
<name>CHDC_STAAN</name>